<protein>
    <recommendedName>
        <fullName evidence="17">Mevalonate kinase</fullName>
        <shortName>MK</shortName>
        <ecNumber evidence="6 12 15 16">2.7.1.36</ecNumber>
    </recommendedName>
</protein>
<accession>Q03426</accession>
<keyword id="KW-0002">3D-structure</keyword>
<keyword id="KW-0067">ATP-binding</keyword>
<keyword id="KW-0898">Cataract</keyword>
<keyword id="KW-0152">Cholesterol biosynthesis</keyword>
<keyword id="KW-0153">Cholesterol metabolism</keyword>
<keyword id="KW-0963">Cytoplasm</keyword>
<keyword id="KW-0225">Disease variant</keyword>
<keyword id="KW-0418">Kinase</keyword>
<keyword id="KW-0444">Lipid biosynthesis</keyword>
<keyword id="KW-0443">Lipid metabolism</keyword>
<keyword id="KW-0460">Magnesium</keyword>
<keyword id="KW-0479">Metal-binding</keyword>
<keyword id="KW-0547">Nucleotide-binding</keyword>
<keyword id="KW-0576">Peroxisome</keyword>
<keyword id="KW-1267">Proteomics identification</keyword>
<keyword id="KW-1185">Reference proteome</keyword>
<keyword id="KW-0752">Steroid biosynthesis</keyword>
<keyword id="KW-0753">Steroid metabolism</keyword>
<keyword id="KW-0756">Sterol biosynthesis</keyword>
<keyword id="KW-1207">Sterol metabolism</keyword>
<keyword id="KW-0808">Transferase</keyword>
<feature type="chain" id="PRO_0000156657" description="Mevalonate kinase">
    <location>
        <begin position="1"/>
        <end position="396"/>
    </location>
</feature>
<feature type="active site" description="Proton donor" evidence="18">
    <location>
        <position position="146"/>
    </location>
</feature>
<feature type="active site" description="Proton acceptor" evidence="19">
    <location>
        <position position="204"/>
    </location>
</feature>
<feature type="binding site" evidence="1">
    <location>
        <position position="13"/>
    </location>
    <ligand>
        <name>ATP</name>
        <dbReference type="ChEBI" id="CHEBI:30616"/>
    </ligand>
</feature>
<feature type="binding site" evidence="1">
    <location>
        <position position="55"/>
    </location>
    <ligand>
        <name>ATP</name>
        <dbReference type="ChEBI" id="CHEBI:30616"/>
    </ligand>
</feature>
<feature type="binding site" evidence="1">
    <location>
        <position position="135"/>
    </location>
    <ligand>
        <name>ATP</name>
        <dbReference type="ChEBI" id="CHEBI:30616"/>
    </ligand>
</feature>
<feature type="binding site" evidence="1">
    <location>
        <begin position="140"/>
        <end position="146"/>
    </location>
    <ligand>
        <name>ATP</name>
        <dbReference type="ChEBI" id="CHEBI:30616"/>
    </ligand>
</feature>
<feature type="binding site" evidence="1">
    <location>
        <position position="146"/>
    </location>
    <ligand>
        <name>Mg(2+)</name>
        <dbReference type="ChEBI" id="CHEBI:18420"/>
    </ligand>
</feature>
<feature type="binding site" evidence="1">
    <location>
        <position position="193"/>
    </location>
    <ligand>
        <name>Mg(2+)</name>
        <dbReference type="ChEBI" id="CHEBI:18420"/>
    </ligand>
</feature>
<feature type="sequence variant" id="VAR_075036" description="In POROK3." evidence="13">
    <original>G</original>
    <variation>R</variation>
    <location>
        <position position="12"/>
    </location>
</feature>
<feature type="sequence variant" id="VAR_010956" description="In HIDS; dbSNP:rs11544299." evidence="8">
    <original>H</original>
    <variation>N</variation>
    <location>
        <position position="20"/>
    </location>
</feature>
<feature type="sequence variant" id="VAR_004022" description="In HIDS and MEVA; dbSNP:rs104895295." evidence="2 7 8">
    <original>H</original>
    <variation>P</variation>
    <location>
        <position position="20"/>
    </location>
</feature>
<feature type="sequence variant" id="VAR_029519" description="In HIDS; dbSNP:rs104895335." evidence="11">
    <original>H</original>
    <variation>Q</variation>
    <location>
        <position position="20"/>
    </location>
</feature>
<feature type="sequence variant" id="VAR_010957" description="In HIDS; dbSNP:rs104895296." evidence="7 8">
    <original>L</original>
    <variation>P</variation>
    <location>
        <position position="39"/>
    </location>
</feature>
<feature type="sequence variant" id="VAR_075037" description="In POROK3; dbSNP:rs397514571." evidence="13">
    <original>L</original>
    <variation>P</variation>
    <location>
        <position position="41"/>
    </location>
</feature>
<feature type="sequence variant" id="VAR_010958" description="In dbSNP:rs7957619." evidence="8 11">
    <original>S</original>
    <variation>N</variation>
    <location>
        <position position="52"/>
    </location>
</feature>
<feature type="sequence variant" id="VAR_029520" description="In HIDS; dbSNP:rs104895336." evidence="11">
    <original>V</original>
    <variation>I</variation>
    <location>
        <position position="132"/>
    </location>
</feature>
<feature type="sequence variant" id="VAR_010959" description="In HIDS; dbSNP:rs104895297." evidence="7">
    <original>S</original>
    <variation>L</variation>
    <location>
        <position position="135"/>
    </location>
</feature>
<feature type="sequence variant" id="VAR_010960" description="In HIDS; dbSNP:rs104895298." evidence="7 11">
    <original>A</original>
    <variation>T</variation>
    <location>
        <position position="148"/>
    </location>
</feature>
<feature type="sequence variant" id="VAR_010961" description="In HIDS; dbSNP:rs747116992." evidence="8">
    <original>S</original>
    <variation>L</variation>
    <location>
        <position position="150"/>
    </location>
</feature>
<feature type="sequence variant" id="VAR_004023" description="In HIDS; dbSNP:rs104895300." evidence="3 8">
    <original>P</original>
    <variation>L</variation>
    <location>
        <position position="167"/>
    </location>
</feature>
<feature type="sequence variant" id="VAR_029521" description="In HIDS; dbSNP:rs104895337." evidence="11">
    <original>G</original>
    <variation>R</variation>
    <location>
        <position position="171"/>
    </location>
</feature>
<feature type="sequence variant" id="VAR_010962" description="In HIDS and POROK3; dbSNP:rs104895301." evidence="8 13">
    <original>G</original>
    <variation>R</variation>
    <location>
        <position position="202"/>
    </location>
</feature>
<feature type="sequence variant" id="VAR_029522" description="In HIDS; dbSNP:rs104895325." evidence="11">
    <original>G</original>
    <variation>E</variation>
    <location>
        <position position="211"/>
    </location>
</feature>
<feature type="sequence variant" id="VAR_010963" description="In HIDS; dbSNP:rs104895303." evidence="8 11">
    <original>R</original>
    <variation>Q</variation>
    <location>
        <position position="215"/>
    </location>
</feature>
<feature type="sequence variant" id="VAR_010964" description="In MEVA; dbSNP:rs104895314." evidence="5">
    <original>T</original>
    <variation>I</variation>
    <location>
        <position position="243"/>
    </location>
</feature>
<feature type="sequence variant" id="VAR_029523" description="In HIDS; dbSNP:rs104895339." evidence="11">
    <original>V</original>
    <variation>I</variation>
    <location>
        <position position="250"/>
    </location>
</feature>
<feature type="sequence variant" id="VAR_075038" description="In POROK3; dbSNP:rs397514570." evidence="13">
    <original>L</original>
    <variation>P</variation>
    <location>
        <position position="255"/>
    </location>
</feature>
<feature type="sequence variant" id="VAR_010965" description="In MEVA; dbSNP:rs104895315." evidence="5 7">
    <original>L</original>
    <variation>F</variation>
    <location>
        <position position="264"/>
    </location>
</feature>
<feature type="sequence variant" id="VAR_010966" description="In MEVA; dbSNP:rs104895316." evidence="5">
    <original>L</original>
    <variation>P</variation>
    <location>
        <position position="265"/>
    </location>
</feature>
<feature type="sequence variant" id="VAR_029524" description="In HIDS; dbSNP:rs104895316." evidence="11">
    <original>L</original>
    <variation>R</variation>
    <location>
        <position position="265"/>
    </location>
</feature>
<feature type="sequence variant" id="VAR_004024" description="In HIDS and MEVA; dbSNP:rs104895304." evidence="2 3 5 7 8 11">
    <original>I</original>
    <variation>T</variation>
    <location>
        <position position="268"/>
    </location>
</feature>
<feature type="sequence variant" id="VAR_075039" description="In POROK3." evidence="13">
    <original>L</original>
    <variation>P</variation>
    <location>
        <position position="279"/>
    </location>
</feature>
<feature type="sequence variant" id="VAR_075040" description="In POROK3." evidence="13">
    <original>Y</original>
    <variation>D</variation>
    <location>
        <position position="291"/>
    </location>
</feature>
<feature type="sequence variant" id="VAR_004025" description="In MEVA; diminished activity; dbSNP:rs121917789." evidence="9">
    <original>N</original>
    <variation>T</variation>
    <location>
        <position position="301"/>
    </location>
</feature>
<feature type="sequence variant" id="VAR_010967" description="In HIDS; dbSNP:rs104895305." evidence="8">
    <original>G</original>
    <variation>S</variation>
    <location>
        <position position="309"/>
    </location>
</feature>
<feature type="sequence variant" id="VAR_009068" description="In MEVA and HIDS; dbSNP:rs104895319." evidence="4 7 11">
    <original>V</original>
    <variation>M</variation>
    <location>
        <position position="310"/>
    </location>
</feature>
<feature type="sequence variant" id="VAR_075041" description="In POROK3." evidence="13">
    <original>H</original>
    <variation>R</variation>
    <location>
        <position position="312"/>
    </location>
</feature>
<feature type="sequence variant" id="VAR_010968" description="In HIDS; dbSNP:rs104895308." evidence="8">
    <original>G</original>
    <variation>R</variation>
    <location>
        <position position="326"/>
    </location>
</feature>
<feature type="sequence variant" id="VAR_004026" description="In MEVA; dbSNP:rs104895317." evidence="4 7 8">
    <original>A</original>
    <variation>T</variation>
    <location>
        <position position="334"/>
    </location>
</feature>
<feature type="sequence variant" id="VAR_029525" description="In dbSNP:rs11614976.">
    <original>G</original>
    <variation>S</variation>
    <location>
        <position position="335"/>
    </location>
</feature>
<feature type="sequence variant" id="VAR_029526" description="In dbSNP:rs104895342." evidence="11">
    <original>T</original>
    <variation>M</variation>
    <location>
        <position position="356"/>
    </location>
</feature>
<feature type="sequence variant" id="VAR_075042" description="In POROK3; dbSNP:rs398122911." evidence="13">
    <original>F</original>
    <variation>S</variation>
    <location>
        <position position="365"/>
    </location>
</feature>
<feature type="sequence variant" id="VAR_075043" description="In POROK3; dbSNP:rs971159663." evidence="13">
    <original>G</original>
    <variation>S</variation>
    <location>
        <position position="376"/>
    </location>
</feature>
<feature type="sequence variant" id="VAR_029527" description="In HIDS; dbSNP:rs104895340." evidence="11">
    <original>G</original>
    <variation>V</variation>
    <location>
        <position position="376"/>
    </location>
</feature>
<feature type="sequence variant" id="VAR_004027" description="In HIDS; most frequent mutation; dbSNP:rs28934897." evidence="2 3 7 8 11">
    <original>V</original>
    <variation>I</variation>
    <location>
        <position position="377"/>
    </location>
</feature>
<feature type="mutagenesis site" description="No change in protein stability. Weak decrease in kinase activity. Approximately 2-fold decrease in Vmax. Approximately 2-fold decrease affinity for ATP and mevalonate." evidence="15">
    <original>E</original>
    <variation>D</variation>
    <location>
        <position position="19"/>
    </location>
</feature>
<feature type="mutagenesis site" description="No effect on kinase activity. Approximately 4- and 5-fold decrease affinities for ATP and mevalonate, respectively." evidence="12">
    <original>I</original>
    <variation>A</variation>
    <location>
        <position position="56"/>
    </location>
</feature>
<feature type="mutagenesis site" description="No effect on kinase activity. Approximately 4-fold increase affinity for ATP. Normal affinity for mevalonate." evidence="12">
    <original>T</original>
    <variation>A</variation>
    <location>
        <position position="104"/>
    </location>
</feature>
<feature type="mutagenesis site" description="Modest changes in KM for ATP. 20-fold increase in KM for mevalonate. Approximately 2-fold decrease in Vmax." evidence="6">
    <original>S</original>
    <variation>A</variation>
    <location>
        <position position="145"/>
    </location>
</feature>
<feature type="mutagenesis site" description="Modest changes in KM for ATP. 20-fold increase in KM for mevalonate. 4000-fold decrease in Vmax." evidence="6">
    <original>S</original>
    <variation>A</variation>
    <location>
        <position position="146"/>
    </location>
</feature>
<feature type="mutagenesis site" description="No effect on kinase activity. Approximately 4- and 8-fold decrease affinities for ATP and mevalonate, respectively." evidence="12">
    <original>Y</original>
    <variation>A</variation>
    <location>
        <position position="149"/>
    </location>
</feature>
<feature type="mutagenesis site" description="No change in protein stability. Decreased kinase activity. Approximately 50-fold decrease in Vmax. Approximately 20- and 40-fold decrease affinities for ATP and mevalonate, respectively." evidence="15">
    <original>E</original>
    <variation>Q</variation>
    <location>
        <position position="193"/>
    </location>
</feature>
<feature type="mutagenesis site" description="No effect on kinase activity. Approximately 2- and 3-fold decrease affinities for ATP and mevalonate, respectively." evidence="12">
    <original>I</original>
    <variation>A</variation>
    <location>
        <position position="196"/>
    </location>
</feature>
<feature type="mutagenesis site" description="Modest changes in KM for ATP. 100-fold increase in KM for mevalonate. Approximately 2-fold increase in Vmax." evidence="6">
    <original>S</original>
    <variation>A</variation>
    <location>
        <position position="201"/>
    </location>
</feature>
<feature type="mutagenesis site" description="No change in protein stability. Loss of kinase activity. Normal affinities for ATP and mevalonate." evidence="15">
    <original>D</original>
    <variation>A</variation>
    <location>
        <position position="204"/>
    </location>
</feature>
<feature type="mutagenesis site" description="No change in protein stability. Loss of kinase activity. Normal affinities for ATP and mevalonate." evidence="15">
    <original>D</original>
    <variation>N</variation>
    <location>
        <position position="204"/>
    </location>
</feature>
<feature type="mutagenesis site" description="Modest changes in KM for ATP. 40-fold increase in KM for mevalonate. Approximately 2-fold decrease in Vmax." evidence="6">
    <original>T</original>
    <variation>A</variation>
    <location>
        <position position="243"/>
    </location>
</feature>
<feature type="mutagenesis site" description="No change in protein stability. No effect on kinase activity." evidence="15">
    <original>E</original>
    <variation>Q</variation>
    <location>
        <position position="296"/>
    </location>
</feature>
<feature type="strand" evidence="22">
    <location>
        <begin position="4"/>
        <end position="17"/>
    </location>
</feature>
<feature type="turn" evidence="22">
    <location>
        <begin position="19"/>
        <end position="21"/>
    </location>
</feature>
<feature type="helix" evidence="22">
    <location>
        <begin position="22"/>
        <end position="24"/>
    </location>
</feature>
<feature type="strand" evidence="22">
    <location>
        <begin position="28"/>
        <end position="43"/>
    </location>
</feature>
<feature type="strand" evidence="22">
    <location>
        <begin position="45"/>
        <end position="52"/>
    </location>
</feature>
<feature type="turn" evidence="22">
    <location>
        <begin position="54"/>
        <end position="56"/>
    </location>
</feature>
<feature type="strand" evidence="22">
    <location>
        <begin position="59"/>
        <end position="63"/>
    </location>
</feature>
<feature type="helix" evidence="22">
    <location>
        <begin position="64"/>
        <end position="69"/>
    </location>
</feature>
<feature type="helix" evidence="22">
    <location>
        <begin position="85"/>
        <end position="95"/>
    </location>
</feature>
<feature type="helix" evidence="22">
    <location>
        <begin position="103"/>
        <end position="119"/>
    </location>
</feature>
<feature type="strand" evidence="22">
    <location>
        <begin position="122"/>
        <end position="125"/>
    </location>
</feature>
<feature type="strand" evidence="22">
    <location>
        <begin position="129"/>
        <end position="137"/>
    </location>
</feature>
<feature type="strand" evidence="22">
    <location>
        <begin position="141"/>
        <end position="143"/>
    </location>
</feature>
<feature type="helix" evidence="22">
    <location>
        <begin position="145"/>
        <end position="160"/>
    </location>
</feature>
<feature type="turn" evidence="22">
    <location>
        <begin position="167"/>
        <end position="171"/>
    </location>
</feature>
<feature type="strand" evidence="22">
    <location>
        <begin position="173"/>
        <end position="175"/>
    </location>
</feature>
<feature type="helix" evidence="22">
    <location>
        <begin position="179"/>
        <end position="196"/>
    </location>
</feature>
<feature type="strand" evidence="22">
    <location>
        <begin position="197"/>
        <end position="199"/>
    </location>
</feature>
<feature type="helix" evidence="22">
    <location>
        <begin position="203"/>
        <end position="210"/>
    </location>
</feature>
<feature type="strand" evidence="22">
    <location>
        <begin position="212"/>
        <end position="216"/>
    </location>
</feature>
<feature type="strand" evidence="22">
    <location>
        <begin position="221"/>
        <end position="223"/>
    </location>
</feature>
<feature type="strand" evidence="22">
    <location>
        <begin position="230"/>
        <end position="236"/>
    </location>
</feature>
<feature type="helix" evidence="22">
    <location>
        <begin position="243"/>
        <end position="256"/>
    </location>
</feature>
<feature type="helix" evidence="22">
    <location>
        <begin position="258"/>
        <end position="283"/>
    </location>
</feature>
<feature type="helix" evidence="22">
    <location>
        <begin position="288"/>
        <end position="307"/>
    </location>
</feature>
<feature type="helix" evidence="22">
    <location>
        <begin position="313"/>
        <end position="323"/>
    </location>
</feature>
<feature type="turn" evidence="22">
    <location>
        <begin position="324"/>
        <end position="326"/>
    </location>
</feature>
<feature type="strand" evidence="22">
    <location>
        <begin position="328"/>
        <end position="331"/>
    </location>
</feature>
<feature type="strand" evidence="22">
    <location>
        <begin position="336"/>
        <end position="343"/>
    </location>
</feature>
<feature type="helix" evidence="22">
    <location>
        <begin position="350"/>
        <end position="361"/>
    </location>
</feature>
<feature type="turn" evidence="22">
    <location>
        <begin position="362"/>
        <end position="364"/>
    </location>
</feature>
<feature type="strand" evidence="22">
    <location>
        <begin position="366"/>
        <end position="373"/>
    </location>
</feature>
<feature type="strand" evidence="22">
    <location>
        <begin position="377"/>
        <end position="380"/>
    </location>
</feature>
<feature type="helix" evidence="22">
    <location>
        <begin position="387"/>
        <end position="392"/>
    </location>
</feature>
<dbReference type="EC" id="2.7.1.36" evidence="6 12 15 16"/>
<dbReference type="EMBL" id="M88468">
    <property type="protein sequence ID" value="AAB59362.1"/>
    <property type="molecule type" value="mRNA"/>
</dbReference>
<dbReference type="EMBL" id="X75311">
    <property type="protein sequence ID" value="CAA53060.1"/>
    <property type="molecule type" value="mRNA"/>
</dbReference>
<dbReference type="EMBL" id="X75311">
    <property type="protein sequence ID" value="CAA53059.1"/>
    <property type="status" value="ALT_INIT"/>
    <property type="molecule type" value="mRNA"/>
</dbReference>
<dbReference type="EMBL" id="AF217535">
    <property type="protein sequence ID" value="AAF82407.1"/>
    <property type="molecule type" value="Genomic_DNA"/>
</dbReference>
<dbReference type="EMBL" id="AF217528">
    <property type="protein sequence ID" value="AAF82407.1"/>
    <property type="status" value="JOINED"/>
    <property type="molecule type" value="Genomic_DNA"/>
</dbReference>
<dbReference type="EMBL" id="AF217529">
    <property type="protein sequence ID" value="AAF82407.1"/>
    <property type="status" value="JOINED"/>
    <property type="molecule type" value="Genomic_DNA"/>
</dbReference>
<dbReference type="EMBL" id="AF217530">
    <property type="protein sequence ID" value="AAF82407.1"/>
    <property type="status" value="JOINED"/>
    <property type="molecule type" value="Genomic_DNA"/>
</dbReference>
<dbReference type="EMBL" id="AF217531">
    <property type="protein sequence ID" value="AAF82407.1"/>
    <property type="status" value="JOINED"/>
    <property type="molecule type" value="Genomic_DNA"/>
</dbReference>
<dbReference type="EMBL" id="AF217532">
    <property type="protein sequence ID" value="AAF82407.1"/>
    <property type="status" value="JOINED"/>
    <property type="molecule type" value="Genomic_DNA"/>
</dbReference>
<dbReference type="EMBL" id="AF217533">
    <property type="protein sequence ID" value="AAF82407.1"/>
    <property type="status" value="JOINED"/>
    <property type="molecule type" value="Genomic_DNA"/>
</dbReference>
<dbReference type="EMBL" id="AF217534">
    <property type="protein sequence ID" value="AAF82407.1"/>
    <property type="status" value="JOINED"/>
    <property type="molecule type" value="Genomic_DNA"/>
</dbReference>
<dbReference type="EMBL" id="BC016140">
    <property type="protein sequence ID" value="AAH16140.1"/>
    <property type="molecule type" value="mRNA"/>
</dbReference>
<dbReference type="CCDS" id="CCDS9132.1"/>
<dbReference type="PIR" id="A42919">
    <property type="entry name" value="A42919"/>
</dbReference>
<dbReference type="RefSeq" id="NP_000422.1">
    <property type="nucleotide sequence ID" value="NM_000431.4"/>
</dbReference>
<dbReference type="RefSeq" id="NP_001107657.1">
    <property type="nucleotide sequence ID" value="NM_001114185.3"/>
</dbReference>
<dbReference type="RefSeq" id="NP_001288111.1">
    <property type="nucleotide sequence ID" value="NM_001301182.1"/>
</dbReference>
<dbReference type="RefSeq" id="NP_001401440.1">
    <property type="nucleotide sequence ID" value="NM_001414511.1"/>
</dbReference>
<dbReference type="RefSeq" id="XP_016874803.1">
    <property type="nucleotide sequence ID" value="XM_017019314.2"/>
</dbReference>
<dbReference type="PDB" id="2R3V">
    <property type="method" value="X-ray"/>
    <property type="resolution" value="2.50 A"/>
    <property type="chains" value="A/B/C/D=1-396"/>
</dbReference>
<dbReference type="PDBsum" id="2R3V"/>
<dbReference type="SMR" id="Q03426"/>
<dbReference type="BioGRID" id="110683">
    <property type="interactions" value="60"/>
</dbReference>
<dbReference type="FunCoup" id="Q03426">
    <property type="interactions" value="1750"/>
</dbReference>
<dbReference type="IntAct" id="Q03426">
    <property type="interactions" value="32"/>
</dbReference>
<dbReference type="MINT" id="Q03426"/>
<dbReference type="STRING" id="9606.ENSP00000228510"/>
<dbReference type="DrugBank" id="DB04695">
    <property type="generic name" value="Farnesyl thiopyrophosphate"/>
</dbReference>
<dbReference type="GuidetoPHARMACOLOGY" id="640"/>
<dbReference type="SwissLipids" id="SLP:000001240"/>
<dbReference type="GlyGen" id="Q03426">
    <property type="glycosylation" value="1 site, 1 O-linked glycan (1 site)"/>
</dbReference>
<dbReference type="iPTMnet" id="Q03426"/>
<dbReference type="PhosphoSitePlus" id="Q03426"/>
<dbReference type="BioMuta" id="MVK"/>
<dbReference type="DMDM" id="417215"/>
<dbReference type="jPOST" id="Q03426"/>
<dbReference type="MassIVE" id="Q03426"/>
<dbReference type="PaxDb" id="9606-ENSP00000443551"/>
<dbReference type="PeptideAtlas" id="Q03426"/>
<dbReference type="ProteomicsDB" id="58211"/>
<dbReference type="Pumba" id="Q03426"/>
<dbReference type="Antibodypedia" id="2047">
    <property type="antibodies" value="390 antibodies from 32 providers"/>
</dbReference>
<dbReference type="DNASU" id="4598"/>
<dbReference type="Ensembl" id="ENST00000228510.8">
    <property type="protein sequence ID" value="ENSP00000228510.3"/>
    <property type="gene ID" value="ENSG00000110921.14"/>
</dbReference>
<dbReference type="Ensembl" id="ENST00000546277.6">
    <property type="protein sequence ID" value="ENSP00000438153.2"/>
    <property type="gene ID" value="ENSG00000110921.14"/>
</dbReference>
<dbReference type="GeneID" id="4598"/>
<dbReference type="KEGG" id="hsa:4598"/>
<dbReference type="MANE-Select" id="ENST00000228510.8">
    <property type="protein sequence ID" value="ENSP00000228510.3"/>
    <property type="RefSeq nucleotide sequence ID" value="NM_000431.4"/>
    <property type="RefSeq protein sequence ID" value="NP_000422.1"/>
</dbReference>
<dbReference type="UCSC" id="uc009zvk.4">
    <property type="organism name" value="human"/>
</dbReference>
<dbReference type="AGR" id="HGNC:7530"/>
<dbReference type="CTD" id="4598"/>
<dbReference type="DisGeNET" id="4598"/>
<dbReference type="GeneCards" id="MVK"/>
<dbReference type="HGNC" id="HGNC:7530">
    <property type="gene designation" value="MVK"/>
</dbReference>
<dbReference type="HPA" id="ENSG00000110921">
    <property type="expression patterns" value="Tissue enhanced (liver)"/>
</dbReference>
<dbReference type="MalaCards" id="MVK"/>
<dbReference type="MIM" id="175900">
    <property type="type" value="phenotype"/>
</dbReference>
<dbReference type="MIM" id="251170">
    <property type="type" value="gene"/>
</dbReference>
<dbReference type="MIM" id="260920">
    <property type="type" value="phenotype"/>
</dbReference>
<dbReference type="MIM" id="610377">
    <property type="type" value="phenotype"/>
</dbReference>
<dbReference type="neXtProt" id="NX_Q03426"/>
<dbReference type="OpenTargets" id="ENSG00000110921"/>
<dbReference type="Orphanet" id="79152">
    <property type="disease" value="Disseminated superficial actinic porokeratosis"/>
</dbReference>
<dbReference type="Orphanet" id="343">
    <property type="disease" value="Hyperimmunoglobulinemia D with periodic fever"/>
</dbReference>
<dbReference type="Orphanet" id="29">
    <property type="disease" value="Mevalonic aciduria"/>
</dbReference>
<dbReference type="Orphanet" id="735">
    <property type="disease" value="Porokeratosis of Mibelli"/>
</dbReference>
<dbReference type="PharmGKB" id="PA31331"/>
<dbReference type="VEuPathDB" id="HostDB:ENSG00000110921"/>
<dbReference type="eggNOG" id="KOG1511">
    <property type="taxonomic scope" value="Eukaryota"/>
</dbReference>
<dbReference type="GeneTree" id="ENSGT00950000183187"/>
<dbReference type="HOGENOM" id="CLU_017814_0_1_1"/>
<dbReference type="InParanoid" id="Q03426"/>
<dbReference type="OMA" id="LMDFNHG"/>
<dbReference type="OrthoDB" id="1652964at2759"/>
<dbReference type="PAN-GO" id="Q03426">
    <property type="GO annotations" value="4 GO annotations based on evolutionary models"/>
</dbReference>
<dbReference type="PhylomeDB" id="Q03426"/>
<dbReference type="TreeFam" id="TF313775"/>
<dbReference type="BioCyc" id="MetaCyc:ENSG00000110921-MONOMER"/>
<dbReference type="BRENDA" id="2.7.1.36">
    <property type="organism ID" value="2681"/>
</dbReference>
<dbReference type="PathwayCommons" id="Q03426"/>
<dbReference type="Reactome" id="R-HSA-191273">
    <property type="pathway name" value="Cholesterol biosynthesis"/>
</dbReference>
<dbReference type="Reactome" id="R-HSA-2426168">
    <property type="pathway name" value="Activation of gene expression by SREBF (SREBP)"/>
</dbReference>
<dbReference type="SABIO-RK" id="Q03426"/>
<dbReference type="SignaLink" id="Q03426"/>
<dbReference type="UniPathway" id="UPA00057">
    <property type="reaction ID" value="UER00098"/>
</dbReference>
<dbReference type="BioGRID-ORCS" id="4598">
    <property type="hits" value="636 hits in 1161 CRISPR screens"/>
</dbReference>
<dbReference type="ChiTaRS" id="MVK">
    <property type="organism name" value="human"/>
</dbReference>
<dbReference type="EvolutionaryTrace" id="Q03426"/>
<dbReference type="GeneWiki" id="Mevalonate_kinase"/>
<dbReference type="GenomeRNAi" id="4598"/>
<dbReference type="Pharos" id="Q03426">
    <property type="development level" value="Tchem"/>
</dbReference>
<dbReference type="PRO" id="PR:Q03426"/>
<dbReference type="Proteomes" id="UP000005640">
    <property type="component" value="Chromosome 12"/>
</dbReference>
<dbReference type="RNAct" id="Q03426">
    <property type="molecule type" value="protein"/>
</dbReference>
<dbReference type="Bgee" id="ENSG00000110921">
    <property type="expression patterns" value="Expressed in lower esophagus mucosa and 192 other cell types or tissues"/>
</dbReference>
<dbReference type="ExpressionAtlas" id="Q03426">
    <property type="expression patterns" value="baseline and differential"/>
</dbReference>
<dbReference type="GO" id="GO:0005829">
    <property type="term" value="C:cytosol"/>
    <property type="evidence" value="ECO:0000314"/>
    <property type="project" value="UniProtKB"/>
</dbReference>
<dbReference type="GO" id="GO:0043231">
    <property type="term" value="C:intracellular membrane-bounded organelle"/>
    <property type="evidence" value="ECO:0000314"/>
    <property type="project" value="HPA"/>
</dbReference>
<dbReference type="GO" id="GO:0005777">
    <property type="term" value="C:peroxisome"/>
    <property type="evidence" value="ECO:0000250"/>
    <property type="project" value="UniProtKB"/>
</dbReference>
<dbReference type="GO" id="GO:0005524">
    <property type="term" value="F:ATP binding"/>
    <property type="evidence" value="ECO:0000250"/>
    <property type="project" value="UniProtKB"/>
</dbReference>
<dbReference type="GO" id="GO:0042802">
    <property type="term" value="F:identical protein binding"/>
    <property type="evidence" value="ECO:0000314"/>
    <property type="project" value="UniProtKB"/>
</dbReference>
<dbReference type="GO" id="GO:0000287">
    <property type="term" value="F:magnesium ion binding"/>
    <property type="evidence" value="ECO:0000250"/>
    <property type="project" value="UniProtKB"/>
</dbReference>
<dbReference type="GO" id="GO:0004496">
    <property type="term" value="F:mevalonate kinase activity"/>
    <property type="evidence" value="ECO:0000314"/>
    <property type="project" value="UniProtKB"/>
</dbReference>
<dbReference type="GO" id="GO:0006695">
    <property type="term" value="P:cholesterol biosynthetic process"/>
    <property type="evidence" value="ECO:0000314"/>
    <property type="project" value="UniProtKB"/>
</dbReference>
<dbReference type="GO" id="GO:0019287">
    <property type="term" value="P:isopentenyl diphosphate biosynthetic process, mevalonate pathway"/>
    <property type="evidence" value="ECO:0000318"/>
    <property type="project" value="GO_Central"/>
</dbReference>
<dbReference type="GO" id="GO:0008299">
    <property type="term" value="P:isoprenoid biosynthetic process"/>
    <property type="evidence" value="ECO:0000314"/>
    <property type="project" value="UniProtKB"/>
</dbReference>
<dbReference type="GO" id="GO:0050728">
    <property type="term" value="P:negative regulation of inflammatory response"/>
    <property type="evidence" value="ECO:0000315"/>
    <property type="project" value="BHF-UCL"/>
</dbReference>
<dbReference type="FunFam" id="3.30.230.10:FF:000119">
    <property type="entry name" value="Mevalonate kinase"/>
    <property type="match status" value="1"/>
</dbReference>
<dbReference type="FunFam" id="3.30.70.890:FF:000003">
    <property type="entry name" value="Mevalonate kinase"/>
    <property type="match status" value="1"/>
</dbReference>
<dbReference type="Gene3D" id="3.30.230.10">
    <property type="match status" value="1"/>
</dbReference>
<dbReference type="Gene3D" id="3.30.70.890">
    <property type="entry name" value="GHMP kinase, C-terminal domain"/>
    <property type="match status" value="1"/>
</dbReference>
<dbReference type="InterPro" id="IPR013750">
    <property type="entry name" value="GHMP_kinase_C_dom"/>
</dbReference>
<dbReference type="InterPro" id="IPR036554">
    <property type="entry name" value="GHMP_kinase_C_sf"/>
</dbReference>
<dbReference type="InterPro" id="IPR006204">
    <property type="entry name" value="GHMP_kinase_N_dom"/>
</dbReference>
<dbReference type="InterPro" id="IPR006203">
    <property type="entry name" value="GHMP_knse_ATP-bd_CS"/>
</dbReference>
<dbReference type="InterPro" id="IPR006205">
    <property type="entry name" value="Mev_gal_kin"/>
</dbReference>
<dbReference type="InterPro" id="IPR020568">
    <property type="entry name" value="Ribosomal_Su5_D2-typ_SF"/>
</dbReference>
<dbReference type="InterPro" id="IPR014721">
    <property type="entry name" value="Ribsml_uS5_D2-typ_fold_subgr"/>
</dbReference>
<dbReference type="NCBIfam" id="TIGR00549">
    <property type="entry name" value="mevalon_kin"/>
    <property type="match status" value="1"/>
</dbReference>
<dbReference type="PANTHER" id="PTHR43290">
    <property type="entry name" value="MEVALONATE KINASE"/>
    <property type="match status" value="1"/>
</dbReference>
<dbReference type="PANTHER" id="PTHR43290:SF2">
    <property type="entry name" value="MEVALONATE KINASE"/>
    <property type="match status" value="1"/>
</dbReference>
<dbReference type="Pfam" id="PF08544">
    <property type="entry name" value="GHMP_kinases_C"/>
    <property type="match status" value="1"/>
</dbReference>
<dbReference type="Pfam" id="PF00288">
    <property type="entry name" value="GHMP_kinases_N"/>
    <property type="match status" value="1"/>
</dbReference>
<dbReference type="PRINTS" id="PR00959">
    <property type="entry name" value="MEVGALKINASE"/>
</dbReference>
<dbReference type="SUPFAM" id="SSF55060">
    <property type="entry name" value="GHMP Kinase, C-terminal domain"/>
    <property type="match status" value="1"/>
</dbReference>
<dbReference type="SUPFAM" id="SSF54211">
    <property type="entry name" value="Ribosomal protein S5 domain 2-like"/>
    <property type="match status" value="1"/>
</dbReference>
<dbReference type="PROSITE" id="PS00627">
    <property type="entry name" value="GHMP_KINASES_ATP"/>
    <property type="match status" value="1"/>
</dbReference>
<name>KIME_HUMAN</name>
<proteinExistence type="evidence at protein level"/>
<reference key="1">
    <citation type="journal article" date="1992" name="J. Biol. Chem.">
        <title>Molecular cloning of human mevalonate kinase and identification of a missense mutation in the genetic disease mevalonic aciduria.</title>
        <authorList>
            <person name="Schafer B.L."/>
            <person name="Bishop R.W."/>
            <person name="Kratunis V.J."/>
            <person name="Kalinowski S.S."/>
            <person name="Mosley S.T."/>
            <person name="Gibson K.M."/>
            <person name="Tanaka R.D."/>
        </authorList>
    </citation>
    <scope>NUCLEOTIDE SEQUENCE [MRNA]</scope>
    <scope>VARIANT MEVA THR-301</scope>
</reference>
<reference key="2">
    <citation type="journal article" date="1994" name="Oncogene">
        <title>Insertional activation of mevalonate kinase by hepatitis B virus DNA in a human hepatoma cell line.</title>
        <authorList>
            <person name="Graef E."/>
            <person name="Caselmann W.H."/>
            <person name="Wells J."/>
            <person name="Koshy R."/>
        </authorList>
    </citation>
    <scope>NUCLEOTIDE SEQUENCE [MRNA]</scope>
    <source>
        <tissue>Hepatoma</tissue>
    </source>
</reference>
<reference key="3">
    <citation type="journal article" date="2001" name="Eur. J. Hum. Genet.">
        <title>Organization of the mevalonate kinase (MVK) gene and identification of novel mutations causing mevalonic aciduria and hyperimmunoglobulinaemia D and periodic fever syndrome.</title>
        <authorList>
            <person name="Houten S.M."/>
            <person name="Koster J."/>
            <person name="Romeijn G.-J."/>
            <person name="Frenkel J."/>
            <person name="Di Rocco M."/>
            <person name="Caruso U."/>
            <person name="Landrieu P."/>
            <person name="Kelley R.I."/>
            <person name="Kuis W."/>
            <person name="Poll-The B.T."/>
            <person name="Gibson K.M."/>
            <person name="Wanders R.J.A."/>
            <person name="Waterham H.R."/>
        </authorList>
    </citation>
    <scope>NUCLEOTIDE SEQUENCE [GENOMIC DNA]</scope>
    <scope>VARIANTS HIDS PRO-20; PRO-39; LEU-135; THR-148; THR-268 AND ILE-377</scope>
    <scope>VARIANTS MEVA PRO-20; PHE-264; THR-268; MET-310 AND THR-334</scope>
</reference>
<reference key="4">
    <citation type="journal article" date="2001" name="Eur. J. Hum. Genet.">
        <authorList>
            <person name="Houten S.M."/>
            <person name="Koster J."/>
            <person name="Romeijn G.-J."/>
            <person name="Frenkel J."/>
            <person name="Di Rocco M."/>
            <person name="Caruso U."/>
            <person name="Landrieu P."/>
            <person name="Kelley R.I."/>
            <person name="Kuis W."/>
            <person name="Poll-The B.T."/>
            <person name="Gibson K.M."/>
            <person name="Wanders R.J.A."/>
            <person name="Waterham H.R."/>
        </authorList>
    </citation>
    <scope>ERRATUM OF PUBMED:11313768</scope>
</reference>
<reference key="5">
    <citation type="journal article" date="2004" name="Genome Res.">
        <title>The status, quality, and expansion of the NIH full-length cDNA project: the Mammalian Gene Collection (MGC).</title>
        <authorList>
            <consortium name="The MGC Project Team"/>
        </authorList>
    </citation>
    <scope>NUCLEOTIDE SEQUENCE [LARGE SCALE MRNA]</scope>
    <source>
        <tissue>Skin</tissue>
    </source>
</reference>
<reference key="6">
    <citation type="journal article" date="1997" name="J. Biol. Chem.">
        <title>Identification of catalytic residues in human mevalonate kinase.</title>
        <authorList>
            <person name="Potter D."/>
            <person name="Miziorko H.M."/>
        </authorList>
    </citation>
    <scope>FUNCTION</scope>
    <scope>CATALYTIC ACTIVITY</scope>
    <scope>BIOPHYSICOCHEMICAL PROPERTIES</scope>
    <scope>PROBABLE ACTIVE SITE</scope>
    <scope>ACTIVITY REGULATION</scope>
    <scope>SUBUNIT</scope>
    <scope>MUTAGENESIS OF GLU-19; GLU-193; ASP-204 AND GLU-296</scope>
</reference>
<reference key="7">
    <citation type="journal article" date="1997" name="J. Lipid Res.">
        <title>Post-translational regulation of mevalonate kinase by intermediates of the cholesterol and nonsterol isoprene biosynthetic pathways.</title>
        <authorList>
            <person name="Hinson D.D."/>
            <person name="Chambliss K.L."/>
            <person name="Toth M.J."/>
            <person name="Tanaka R.D."/>
            <person name="Gibson K.M."/>
        </authorList>
    </citation>
    <scope>FUNCTION</scope>
    <scope>CATALYTIC ACTIVITY</scope>
</reference>
<reference key="8">
    <citation type="journal article" date="2001" name="J. Biol. Chem.">
        <title>Investigation of invariant serine/threonine residues in mevalonate kinase. Tests of the functional significance of a proposed substrate binding motif and a site implicated in human inherited disease.</title>
        <authorList>
            <person name="Cho Y.K."/>
            <person name="Rios S.E."/>
            <person name="Kim J.J."/>
            <person name="Miziorko H.M."/>
        </authorList>
    </citation>
    <scope>MUTAGENESIS OF SER-145; SER-146; SER-201 AND THR-243</scope>
    <scope>FUNCTION</scope>
    <scope>CATALYTIC ACTIVITY</scope>
    <scope>BIOPHYSICOCHEMICAL PROPERTIES</scope>
</reference>
<reference key="9">
    <citation type="journal article" date="2004" name="J. Cell Sci.">
        <title>Mevalonate kinase is a cytosolic enzyme in humans.</title>
        <authorList>
            <person name="Hogenboom S."/>
            <person name="Tuyp J.J."/>
            <person name="Espeel M."/>
            <person name="Koster J."/>
            <person name="Wanders R.J."/>
            <person name="Waterham H.R."/>
        </authorList>
    </citation>
    <scope>SUBCELLULAR LOCATION</scope>
</reference>
<reference key="10">
    <citation type="journal article" date="2011" name="BMC Syst. Biol.">
        <title>Initial characterization of the human central proteome.</title>
        <authorList>
            <person name="Burkard T.R."/>
            <person name="Planyavsky M."/>
            <person name="Kaupe I."/>
            <person name="Breitwieser F.P."/>
            <person name="Buerckstuemmer T."/>
            <person name="Bennett K.L."/>
            <person name="Superti-Furga G."/>
            <person name="Colinge J."/>
        </authorList>
    </citation>
    <scope>IDENTIFICATION BY MASS SPECTROMETRY [LARGE SCALE ANALYSIS]</scope>
</reference>
<reference key="11">
    <citation type="journal article" date="2012" name="Nat. Genet.">
        <title>Exome sequencing identifies MVK mutations in disseminated superficial actinic porokeratosis.</title>
        <authorList>
            <person name="Zhang S.Q."/>
            <person name="Jiang T."/>
            <person name="Li M."/>
            <person name="Zhang X."/>
            <person name="Ren Y.Q."/>
            <person name="Wei S.C."/>
            <person name="Sun L.D."/>
            <person name="Cheng H."/>
            <person name="Li Y."/>
            <person name="Yin X.Y."/>
            <person name="Hu Z.M."/>
            <person name="Wang Z.Y."/>
            <person name="Liu Y."/>
            <person name="Guo B.R."/>
            <person name="Tang H.Y."/>
            <person name="Tang X.F."/>
            <person name="Ding Y.T."/>
            <person name="Wang J.B."/>
            <person name="Li P."/>
            <person name="Wu B.Y."/>
            <person name="Wang W."/>
            <person name="Yuan X.F."/>
            <person name="Hou J.S."/>
            <person name="Ha W.W."/>
            <person name="Wang W.J."/>
            <person name="Zhai Y.J."/>
            <person name="Wang J."/>
            <person name="Qian F.F."/>
            <person name="Zhou F.S."/>
            <person name="Chen G."/>
            <person name="Zuo X.B."/>
            <person name="Zheng X.D."/>
            <person name="Sheng Y.J."/>
            <person name="Gao J.P."/>
            <person name="Liang B."/>
            <person name="Li P."/>
            <person name="Zhu J."/>
            <person name="Xiao F.L."/>
            <person name="Wang P.G."/>
            <person name="Cui Y."/>
            <person name="Li H."/>
            <person name="Liu S.X."/>
            <person name="Gao M."/>
            <person name="Fan X."/>
            <person name="Shen S.K."/>
            <person name="Zeng M."/>
            <person name="Sun G.Q."/>
            <person name="Xu Y."/>
            <person name="Hu J.C."/>
            <person name="He T.T."/>
            <person name="Li Y.R."/>
            <person name="Yang H.M."/>
            <person name="Wang J."/>
            <person name="Yu Z.Y."/>
            <person name="Zhang H.F."/>
            <person name="Hu X."/>
            <person name="Yang K."/>
            <person name="Wang J."/>
            <person name="Zhao S.X."/>
            <person name="Zhou Y.W."/>
            <person name="Liu J.J."/>
            <person name="Du W.D."/>
            <person name="Zhang L."/>
            <person name="Xia K."/>
            <person name="Yang S."/>
            <person name="Wang J."/>
            <person name="Zhang X.J."/>
        </authorList>
    </citation>
    <scope>INVOLVEMENT IN POROK3</scope>
    <scope>VARIANTS POROK3 ARG-12; PRO-41; ARG-202; PRO-255; PRO-279; ASP-291; ARG-312; SER-365 AND SER-376</scope>
</reference>
<reference key="12">
    <citation type="journal article" date="2014" name="Arch. Dermatol. Res.">
        <title>Splicing mutation in MVK is a cause of porokeratosis of Mibelli.</title>
        <authorList>
            <person name="Zeng K."/>
            <person name="Zhang Q.G."/>
            <person name="Li L."/>
            <person name="Duan Y."/>
            <person name="Liang Y.H."/>
        </authorList>
    </citation>
    <scope>INVOLVEMENT IN POROK3</scope>
</reference>
<reference evidence="21" key="13">
    <citation type="journal article" date="2008" name="Biochemistry">
        <title>Biochemical and structural basis for feedback inhibition of mevalonate kinase and isoprenoid metabolism.</title>
        <authorList>
            <person name="Fu Z."/>
            <person name="Voynova N.E."/>
            <person name="Herdendorf T.J."/>
            <person name="Miziorko H.M."/>
            <person name="Kim J.J."/>
        </authorList>
    </citation>
    <scope>X-RAY CRYSTALLOGRAPHY (2.50 ANGSTROMS)</scope>
    <scope>FUNCTION</scope>
    <scope>CATALYTIC ACTIVITY</scope>
    <scope>BIOPHYSICOCHEMICAL PROPERTIES</scope>
    <scope>ACTIVITY REGULATION</scope>
    <scope>MUTAGENESIS OF ILE-56; THR-104; TYR-149 AND ILE-196</scope>
</reference>
<reference key="14">
    <citation type="journal article" date="1999" name="Am. J. Hum. Genet.">
        <title>Identification of a mutation cluster in mevalonate kinase deficiency, including a new mutation in a patient of Mennonite ancestry.</title>
        <authorList>
            <person name="Hinson D.D."/>
            <person name="Ross R.M."/>
            <person name="Krisans S."/>
            <person name="Shaw J.L."/>
            <person name="Kozich V."/>
            <person name="Rolland M.-O."/>
            <person name="Divry P."/>
            <person name="Mancini J."/>
            <person name="Hoffmann G.F."/>
            <person name="Gibson K.M."/>
        </authorList>
    </citation>
    <scope>VARIANTS MEVA ILE-243; PHE-264; PRO-265 AND THR-268</scope>
</reference>
<reference key="15">
    <citation type="journal article" date="1999" name="Hum. Mol. Genet.">
        <title>Identification and characterization of three novel missense mutations in mevalonate kinase cDNA causing mevalonic aciduria, a disorder of isoprene biosynthesis.</title>
        <authorList>
            <person name="Houten S.M."/>
            <person name="Romeijn G.J."/>
            <person name="Koster J."/>
            <person name="Gray R.G.F."/>
            <person name="Darbyshire P."/>
            <person name="Smit G.P.A."/>
            <person name="de Klerk J.B.C."/>
            <person name="Duran R."/>
            <person name="Gibson K.M."/>
            <person name="Wanders R.J.A."/>
            <person name="Waterham H.R."/>
        </authorList>
    </citation>
    <scope>VARIANTS MEVA MET-310 AND THR-334</scope>
</reference>
<reference key="16">
    <citation type="journal article" date="1999" name="Nat. Genet.">
        <title>Mutations in MVK, encoding mevalonate kinase, cause hyperimmunoglobulinaemia D and periodic fever syndrome.</title>
        <authorList>
            <person name="Houten S.M."/>
            <person name="Kuis W."/>
            <person name="Duran M."/>
            <person name="de Koning T.J."/>
            <person name="van Royen-Kerkhof A."/>
            <person name="Romeijn G.J."/>
            <person name="Frenkel J."/>
            <person name="Dorland L."/>
            <person name="de Barse M.M.J."/>
            <person name="Huijbers W.A.R."/>
            <person name="Rijkers G.T."/>
            <person name="Waterham H.R."/>
            <person name="Wanders R.J.A."/>
            <person name="Poll-The B.T."/>
        </authorList>
    </citation>
    <scope>VARIANTS HIDS PRO-20; THR-268 AND ILE-377</scope>
</reference>
<reference key="17">
    <citation type="journal article" date="1999" name="Nat. Genet.">
        <title>Mutations in the gene encoding mevalonate kinase cause hyper-IgD and periodic fever syndrome.</title>
        <authorList>
            <person name="Drenth J.P.H."/>
            <person name="Cuisset L."/>
            <person name="Grateau G."/>
            <person name="Vasseur C."/>
            <person name="van der Velde-Visser S.D."/>
            <person name="de Jong J.G.N."/>
            <person name="Beckmann J.S."/>
            <person name="van der Meer J.W.M."/>
            <person name="Delpech M."/>
        </authorList>
    </citation>
    <scope>VARIANTS HIDS LEU-167; THR-268 AND ILE-377</scope>
</reference>
<reference key="18">
    <citation type="journal article" date="2001" name="Eur. J. Hum. Genet.">
        <title>Molecular analysis of MVK mutations and enzymatic activity in hyper-IgD and periodic fever syndrome.</title>
        <authorList>
            <person name="Cuisset L."/>
            <person name="Drenth J.P.H."/>
            <person name="Simon A."/>
            <person name="Vincent M.-F."/>
            <person name="van der Velde-Visser S.D."/>
            <person name="van der Meer J.W.M."/>
            <person name="Grateau G."/>
            <person name="Delpech M."/>
        </authorList>
    </citation>
    <scope>VARIANTS HIDS ASN-20; PRO-20; PRO-39; LEU-150; LEU-167; ARG-202; GLN-215; THR-268; SER-309; ARG-326 AND ILE-377</scope>
    <scope>VARIANT MEVA THR-334</scope>
    <scope>VARIANT ASN-52</scope>
</reference>
<reference key="19">
    <citation type="journal article" date="2005" name="Eur. J. Hum. Genet.">
        <title>MVK mutations and associated clinical features in Italian patients affected with autoinflammatory disorders and recurrent fever.</title>
        <authorList>
            <person name="D'Osualdo A."/>
            <person name="Picco P."/>
            <person name="Caroli F."/>
            <person name="Gattorno M."/>
            <person name="Giacchino R."/>
            <person name="Fortini P."/>
            <person name="Corona F."/>
            <person name="Tommasini A."/>
            <person name="Salvi G."/>
            <person name="Specchia F."/>
            <person name="Obici L."/>
            <person name="Meini A."/>
            <person name="Ricci A."/>
            <person name="Seri M."/>
            <person name="Ravazzolo R."/>
            <person name="Martini A."/>
            <person name="Ceccherini I."/>
        </authorList>
    </citation>
    <scope>VARIANTS HIDS GLN-20; ILE-132; THR-148; ARG-171; GLU-211; GLN-215; ILE-250; ARG-265; THR-268; MET-310; VAL-376 AND ILE-377</scope>
    <scope>VARIANTS ASN-52 AND MET-356</scope>
</reference>
<sequence>MLSEVLLVSAPGKVILHGEHAVVHGKVALAVSLNLRTFLRLQPHSNGKVDLSLPNIGIKRAWDVARLQSLDTSFLEQGDVTTPTSEQVEKLKEVAGLPDDCAVTERLAVLAFLYLYLSICRKQRALPSLDIVVWSELPPGAGLGSSAAYSVCLAAALLTVCEEIPNPLKDGDCVNRWTKEDLELINKWAFQGERMIHGNPSGVDNAVSTWGGALRYHQGKISSLKRSPALQILLTNTKVPRNTRALVAGVRNRLLKFPEIVAPLLTSIDAISLECERVLGEMGEAPAPEQYLVLEELIDMNQHHLNALGVGHASLDQLCQVTRARGLHSKLTGAGGGGCGITLLKPGLEQPEVEATKQALTSCGFDCLETSIGAPGVSIHSATSLDSRVQQALDGL</sequence>
<organism>
    <name type="scientific">Homo sapiens</name>
    <name type="common">Human</name>
    <dbReference type="NCBI Taxonomy" id="9606"/>
    <lineage>
        <taxon>Eukaryota</taxon>
        <taxon>Metazoa</taxon>
        <taxon>Chordata</taxon>
        <taxon>Craniata</taxon>
        <taxon>Vertebrata</taxon>
        <taxon>Euteleostomi</taxon>
        <taxon>Mammalia</taxon>
        <taxon>Eutheria</taxon>
        <taxon>Euarchontoglires</taxon>
        <taxon>Primates</taxon>
        <taxon>Haplorrhini</taxon>
        <taxon>Catarrhini</taxon>
        <taxon>Hominidae</taxon>
        <taxon>Homo</taxon>
    </lineage>
</organism>
<evidence type="ECO:0000250" key="1">
    <source>
        <dbReference type="UniProtKB" id="P17256"/>
    </source>
</evidence>
<evidence type="ECO:0000269" key="2">
    <source>
    </source>
</evidence>
<evidence type="ECO:0000269" key="3">
    <source>
    </source>
</evidence>
<evidence type="ECO:0000269" key="4">
    <source>
    </source>
</evidence>
<evidence type="ECO:0000269" key="5">
    <source>
    </source>
</evidence>
<evidence type="ECO:0000269" key="6">
    <source>
    </source>
</evidence>
<evidence type="ECO:0000269" key="7">
    <source>
    </source>
</evidence>
<evidence type="ECO:0000269" key="8">
    <source>
    </source>
</evidence>
<evidence type="ECO:0000269" key="9">
    <source>
    </source>
</evidence>
<evidence type="ECO:0000269" key="10">
    <source>
    </source>
</evidence>
<evidence type="ECO:0000269" key="11">
    <source>
    </source>
</evidence>
<evidence type="ECO:0000269" key="12">
    <source>
    </source>
</evidence>
<evidence type="ECO:0000269" key="13">
    <source>
    </source>
</evidence>
<evidence type="ECO:0000269" key="14">
    <source>
    </source>
</evidence>
<evidence type="ECO:0000269" key="15">
    <source>
    </source>
</evidence>
<evidence type="ECO:0000269" key="16">
    <source>
    </source>
</evidence>
<evidence type="ECO:0000305" key="17"/>
<evidence type="ECO:0000305" key="18">
    <source>
    </source>
</evidence>
<evidence type="ECO:0000305" key="19">
    <source>
    </source>
</evidence>
<evidence type="ECO:0000312" key="20">
    <source>
        <dbReference type="HGNC" id="HGNC:7530"/>
    </source>
</evidence>
<evidence type="ECO:0007744" key="21">
    <source>
        <dbReference type="PDB" id="2R3V"/>
    </source>
</evidence>
<evidence type="ECO:0007829" key="22">
    <source>
        <dbReference type="PDB" id="2R3V"/>
    </source>
</evidence>
<comment type="function">
    <text evidence="6 12 15 16">Catalyzes the phosphorylation of mevalonate to mevalonate 5-phosphate, a key step in isoprenoid and cholesterol biosynthesis (PubMed:11278915, PubMed:18302342, PubMed:9325256, PubMed:9392419).</text>
</comment>
<comment type="catalytic activity">
    <reaction evidence="6 12 15 16">
        <text>(R)-mevalonate + ATP = (R)-5-phosphomevalonate + ADP + H(+)</text>
        <dbReference type="Rhea" id="RHEA:17065"/>
        <dbReference type="ChEBI" id="CHEBI:15378"/>
        <dbReference type="ChEBI" id="CHEBI:30616"/>
        <dbReference type="ChEBI" id="CHEBI:36464"/>
        <dbReference type="ChEBI" id="CHEBI:58146"/>
        <dbReference type="ChEBI" id="CHEBI:456216"/>
        <dbReference type="EC" id="2.7.1.36"/>
    </reaction>
</comment>
<comment type="cofactor">
    <cofactor evidence="1">
        <name>Mg(2+)</name>
        <dbReference type="ChEBI" id="CHEBI:18420"/>
    </cofactor>
</comment>
<comment type="activity regulation">
    <text evidence="12 16">Farnesyl pyrophosphate and geranyl pyrophosphate inhibit mevalonate kinase activity by binding competitively at the ATP-binding sites.</text>
</comment>
<comment type="biophysicochemical properties">
    <kinetics>
        <KM evidence="15">74 uM for ATP</KM>
        <KM evidence="12">178 uM for ATP</KM>
        <KM evidence="6">12.2 uM for adenosine 5-O-[S-(acetamidoproxyl)-3-thiotriphosphate]</KM>
        <KM evidence="15">24 uM for (R)-mevalonate</KM>
        <KM evidence="12">40 uM for (R)-mevalonate</KM>
        <Vmax evidence="15">37.0 umol/min/mg enzyme with (R)-mevalonate as substrate</Vmax>
        <Vmax evidence="12">28.0 umol/min/mg enzyme with (R)-mevalonate as substrate</Vmax>
    </kinetics>
</comment>
<comment type="pathway">
    <text evidence="17">Isoprenoid biosynthesis; isopentenyl diphosphate biosynthesis via mevalonate pathway; isopentenyl diphosphate from (R)-mevalonate: step 1/3.</text>
</comment>
<comment type="subunit">
    <text evidence="15">Homodimer.</text>
</comment>
<comment type="interaction">
    <interactant intactId="EBI-740630">
        <id>Q03426</id>
    </interactant>
    <interactant intactId="EBI-740630">
        <id>Q03426</id>
        <label>MVK</label>
    </interactant>
    <organismsDiffer>false</organismsDiffer>
    <experiments>12</experiments>
</comment>
<comment type="interaction">
    <interactant intactId="EBI-740630">
        <id>Q03426</id>
    </interactant>
    <interactant intactId="EBI-752420">
        <id>Q9NUX5</id>
        <label>POT1</label>
    </interactant>
    <organismsDiffer>false</organismsDiffer>
    <experiments>2</experiments>
</comment>
<comment type="interaction">
    <interactant intactId="EBI-740630">
        <id>Q03426</id>
    </interactant>
    <interactant intactId="EBI-4308142">
        <id>Q8WVD5</id>
        <label>RNF141</label>
    </interactant>
    <organismsDiffer>false</organismsDiffer>
    <experiments>3</experiments>
</comment>
<comment type="subcellular location">
    <subcellularLocation>
        <location evidence="10">Cytoplasm</location>
    </subcellularLocation>
    <subcellularLocation>
        <location evidence="1">Peroxisome</location>
    </subcellularLocation>
</comment>
<comment type="disease" evidence="4 5 7 8 9">
    <disease id="DI-01975">
        <name>Mevalonic aciduria</name>
        <acronym>MEVA</acronym>
        <description>Accumulation of mevalonic acid which causes a variety of symptoms such as psychomotor retardation, dysmorphic features, cataracts, hepatosplenomegaly, lymphadenopathy, anemia, hypotonia, myopathy, and ataxia.</description>
        <dbReference type="MIM" id="610377"/>
    </disease>
    <text>The disease is caused by variants affecting the gene represented in this entry.</text>
</comment>
<comment type="disease" evidence="2 3 7 8 11">
    <disease id="DI-01768">
        <name>Hyperimmunoglobulinemia D and periodic fever syndrome</name>
        <acronym>HIDS</acronym>
        <description>Autosomal recessive disease characterized by recurrent episodes of unexplained high fever associated with skin rash, diarrhea, adenopathy (swollen, tender lymph nodes), arthralgias and/or arthritis. Concentration of IgD, and often IgA, are above normal.</description>
        <dbReference type="MIM" id="260920"/>
    </disease>
    <text>The disease is caused by variants affecting the gene represented in this entry.</text>
</comment>
<comment type="disease" evidence="13 14">
    <disease id="DI-01490">
        <name>Porokeratosis 3, multiple types</name>
        <acronym>POROK3</acronym>
        <description>A form of porokeratosis, a disorder of faulty keratinization characterized by one or more atrophic patches surrounded by a distinctive hyperkeratotic ridgelike border called the cornoid lamella. The keratotic lesions can progress to overt cutaneous neoplasms, typically squamous cell carcinomas. Multiple clinical variants of porokeratosis are recognized, including porokeratosis of Mibelli, linear porokeratosis, disseminated superficial actinic porokeratosis, palmoplantar porokeratosis, and punctate porokeratosis. Different clinical presentations can be observed among members of the same family. Individuals expressing more than one variant have also been reported.</description>
        <dbReference type="MIM" id="175900"/>
    </disease>
    <text>The disease is caused by variants affecting the gene represented in this entry.</text>
</comment>
<comment type="similarity">
    <text evidence="17">Belongs to the GHMP kinase family. Mevalonate kinase subfamily.</text>
</comment>
<comment type="sequence caution" evidence="17">
    <conflict type="erroneous initiation">
        <sequence resource="EMBL-CDS" id="CAA53059"/>
    </conflict>
    <text>Extended N-terminus.</text>
</comment>
<comment type="online information" name="INFEVERS">
    <link uri="https://infevers.umai-montpellier.fr/web/search.php?n=3"/>
    <text>Repertory of FMF and hereditary autoinflammatory disorders mutations</text>
</comment>
<gene>
    <name evidence="20" type="primary">MVK</name>
</gene>